<dbReference type="EC" id="6.3.4.4" evidence="1"/>
<dbReference type="EMBL" id="CP001339">
    <property type="protein sequence ID" value="ACL71994.1"/>
    <property type="molecule type" value="Genomic_DNA"/>
</dbReference>
<dbReference type="RefSeq" id="WP_012637482.1">
    <property type="nucleotide sequence ID" value="NC_011901.1"/>
</dbReference>
<dbReference type="SMR" id="B8GND3"/>
<dbReference type="STRING" id="396588.Tgr7_0903"/>
<dbReference type="KEGG" id="tgr:Tgr7_0903"/>
<dbReference type="eggNOG" id="COG0104">
    <property type="taxonomic scope" value="Bacteria"/>
</dbReference>
<dbReference type="HOGENOM" id="CLU_029848_0_0_6"/>
<dbReference type="OrthoDB" id="9807553at2"/>
<dbReference type="UniPathway" id="UPA00075">
    <property type="reaction ID" value="UER00335"/>
</dbReference>
<dbReference type="Proteomes" id="UP000002383">
    <property type="component" value="Chromosome"/>
</dbReference>
<dbReference type="GO" id="GO:0005737">
    <property type="term" value="C:cytoplasm"/>
    <property type="evidence" value="ECO:0007669"/>
    <property type="project" value="UniProtKB-SubCell"/>
</dbReference>
<dbReference type="GO" id="GO:0004019">
    <property type="term" value="F:adenylosuccinate synthase activity"/>
    <property type="evidence" value="ECO:0007669"/>
    <property type="project" value="UniProtKB-UniRule"/>
</dbReference>
<dbReference type="GO" id="GO:0005525">
    <property type="term" value="F:GTP binding"/>
    <property type="evidence" value="ECO:0007669"/>
    <property type="project" value="UniProtKB-UniRule"/>
</dbReference>
<dbReference type="GO" id="GO:0000287">
    <property type="term" value="F:magnesium ion binding"/>
    <property type="evidence" value="ECO:0007669"/>
    <property type="project" value="UniProtKB-UniRule"/>
</dbReference>
<dbReference type="GO" id="GO:0044208">
    <property type="term" value="P:'de novo' AMP biosynthetic process"/>
    <property type="evidence" value="ECO:0007669"/>
    <property type="project" value="UniProtKB-UniRule"/>
</dbReference>
<dbReference type="GO" id="GO:0046040">
    <property type="term" value="P:IMP metabolic process"/>
    <property type="evidence" value="ECO:0007669"/>
    <property type="project" value="TreeGrafter"/>
</dbReference>
<dbReference type="CDD" id="cd03108">
    <property type="entry name" value="AdSS"/>
    <property type="match status" value="1"/>
</dbReference>
<dbReference type="FunFam" id="1.10.300.10:FF:000001">
    <property type="entry name" value="Adenylosuccinate synthetase"/>
    <property type="match status" value="1"/>
</dbReference>
<dbReference type="FunFam" id="3.90.170.10:FF:000001">
    <property type="entry name" value="Adenylosuccinate synthetase"/>
    <property type="match status" value="1"/>
</dbReference>
<dbReference type="Gene3D" id="3.40.440.10">
    <property type="entry name" value="Adenylosuccinate Synthetase, subunit A, domain 1"/>
    <property type="match status" value="1"/>
</dbReference>
<dbReference type="Gene3D" id="1.10.300.10">
    <property type="entry name" value="Adenylosuccinate Synthetase, subunit A, domain 2"/>
    <property type="match status" value="1"/>
</dbReference>
<dbReference type="Gene3D" id="3.90.170.10">
    <property type="entry name" value="Adenylosuccinate Synthetase, subunit A, domain 3"/>
    <property type="match status" value="1"/>
</dbReference>
<dbReference type="HAMAP" id="MF_00011">
    <property type="entry name" value="Adenylosucc_synth"/>
    <property type="match status" value="1"/>
</dbReference>
<dbReference type="InterPro" id="IPR018220">
    <property type="entry name" value="Adenylosuccin_syn_GTP-bd"/>
</dbReference>
<dbReference type="InterPro" id="IPR033128">
    <property type="entry name" value="Adenylosuccin_syn_Lys_AS"/>
</dbReference>
<dbReference type="InterPro" id="IPR042109">
    <property type="entry name" value="Adenylosuccinate_synth_dom1"/>
</dbReference>
<dbReference type="InterPro" id="IPR042110">
    <property type="entry name" value="Adenylosuccinate_synth_dom2"/>
</dbReference>
<dbReference type="InterPro" id="IPR042111">
    <property type="entry name" value="Adenylosuccinate_synth_dom3"/>
</dbReference>
<dbReference type="InterPro" id="IPR001114">
    <property type="entry name" value="Adenylosuccinate_synthetase"/>
</dbReference>
<dbReference type="InterPro" id="IPR027417">
    <property type="entry name" value="P-loop_NTPase"/>
</dbReference>
<dbReference type="NCBIfam" id="NF002223">
    <property type="entry name" value="PRK01117.1"/>
    <property type="match status" value="1"/>
</dbReference>
<dbReference type="NCBIfam" id="TIGR00184">
    <property type="entry name" value="purA"/>
    <property type="match status" value="1"/>
</dbReference>
<dbReference type="PANTHER" id="PTHR11846">
    <property type="entry name" value="ADENYLOSUCCINATE SYNTHETASE"/>
    <property type="match status" value="1"/>
</dbReference>
<dbReference type="PANTHER" id="PTHR11846:SF0">
    <property type="entry name" value="ADENYLOSUCCINATE SYNTHETASE"/>
    <property type="match status" value="1"/>
</dbReference>
<dbReference type="Pfam" id="PF00709">
    <property type="entry name" value="Adenylsucc_synt"/>
    <property type="match status" value="1"/>
</dbReference>
<dbReference type="SMART" id="SM00788">
    <property type="entry name" value="Adenylsucc_synt"/>
    <property type="match status" value="1"/>
</dbReference>
<dbReference type="SUPFAM" id="SSF52540">
    <property type="entry name" value="P-loop containing nucleoside triphosphate hydrolases"/>
    <property type="match status" value="1"/>
</dbReference>
<dbReference type="PROSITE" id="PS01266">
    <property type="entry name" value="ADENYLOSUCCIN_SYN_1"/>
    <property type="match status" value="1"/>
</dbReference>
<dbReference type="PROSITE" id="PS00513">
    <property type="entry name" value="ADENYLOSUCCIN_SYN_2"/>
    <property type="match status" value="1"/>
</dbReference>
<reference key="1">
    <citation type="journal article" date="2011" name="Stand. Genomic Sci.">
        <title>Complete genome sequence of 'Thioalkalivibrio sulfidophilus' HL-EbGr7.</title>
        <authorList>
            <person name="Muyzer G."/>
            <person name="Sorokin D.Y."/>
            <person name="Mavromatis K."/>
            <person name="Lapidus A."/>
            <person name="Clum A."/>
            <person name="Ivanova N."/>
            <person name="Pati A."/>
            <person name="d'Haeseleer P."/>
            <person name="Woyke T."/>
            <person name="Kyrpides N.C."/>
        </authorList>
    </citation>
    <scope>NUCLEOTIDE SEQUENCE [LARGE SCALE GENOMIC DNA]</scope>
    <source>
        <strain>HL-EbGR7</strain>
    </source>
</reference>
<accession>B8GND3</accession>
<comment type="function">
    <text evidence="1">Plays an important role in the de novo pathway of purine nucleotide biosynthesis. Catalyzes the first committed step in the biosynthesis of AMP from IMP.</text>
</comment>
<comment type="catalytic activity">
    <reaction evidence="1">
        <text>IMP + L-aspartate + GTP = N(6)-(1,2-dicarboxyethyl)-AMP + GDP + phosphate + 2 H(+)</text>
        <dbReference type="Rhea" id="RHEA:15753"/>
        <dbReference type="ChEBI" id="CHEBI:15378"/>
        <dbReference type="ChEBI" id="CHEBI:29991"/>
        <dbReference type="ChEBI" id="CHEBI:37565"/>
        <dbReference type="ChEBI" id="CHEBI:43474"/>
        <dbReference type="ChEBI" id="CHEBI:57567"/>
        <dbReference type="ChEBI" id="CHEBI:58053"/>
        <dbReference type="ChEBI" id="CHEBI:58189"/>
        <dbReference type="EC" id="6.3.4.4"/>
    </reaction>
</comment>
<comment type="cofactor">
    <cofactor evidence="1">
        <name>Mg(2+)</name>
        <dbReference type="ChEBI" id="CHEBI:18420"/>
    </cofactor>
    <text evidence="1">Binds 1 Mg(2+) ion per subunit.</text>
</comment>
<comment type="pathway">
    <text evidence="1">Purine metabolism; AMP biosynthesis via de novo pathway; AMP from IMP: step 1/2.</text>
</comment>
<comment type="subunit">
    <text evidence="1">Homodimer.</text>
</comment>
<comment type="subcellular location">
    <subcellularLocation>
        <location evidence="1">Cytoplasm</location>
    </subcellularLocation>
</comment>
<comment type="similarity">
    <text evidence="1">Belongs to the adenylosuccinate synthetase family.</text>
</comment>
<sequence>MGKFAVVLGSQWGDEGKGKVVDLLTENAAAVVRFQGGHNAGHTLVIDGKKTVLHLIPSGILREGVECMIGNGVVLSPEALMKEMAQLEAEGVPVRDRLRLSESCQLILPYHVSLDLAREQARGKAAIGTTGRGIGPAYEDKVSRRGLRLGDLFHRERFAAKLGEVLDYHNFVLQHYFKSEAVDFQQVLDQSLALAETLQPLVMDVPERLRELRAQGANVMFEGAQGTLLDIDHGTYPFVTSSNTTAGGACTGSGVGPLDLDYVLGITKAYTTRVGAGPFPTELFDAMGEHLARRGHEFGSTTGRARRCGWFDAVALRRAVAINSISGLCVTKLDVLDGLETLQLCVGYRCGDAEFSVPPAGADAFATCEPIYEEMPGWQESTLGVTRREDLPVNALRYLERIQEIIGVPVDMISTGPDRDQTIVLRHPFE</sequence>
<feature type="chain" id="PRO_1000116490" description="Adenylosuccinate synthetase">
    <location>
        <begin position="1"/>
        <end position="430"/>
    </location>
</feature>
<feature type="active site" description="Proton acceptor" evidence="1">
    <location>
        <position position="14"/>
    </location>
</feature>
<feature type="active site" description="Proton donor" evidence="1">
    <location>
        <position position="42"/>
    </location>
</feature>
<feature type="binding site" evidence="1">
    <location>
        <begin position="13"/>
        <end position="19"/>
    </location>
    <ligand>
        <name>GTP</name>
        <dbReference type="ChEBI" id="CHEBI:37565"/>
    </ligand>
</feature>
<feature type="binding site" description="in other chain" evidence="1">
    <location>
        <begin position="14"/>
        <end position="17"/>
    </location>
    <ligand>
        <name>IMP</name>
        <dbReference type="ChEBI" id="CHEBI:58053"/>
        <note>ligand shared between dimeric partners</note>
    </ligand>
</feature>
<feature type="binding site" evidence="1">
    <location>
        <position position="14"/>
    </location>
    <ligand>
        <name>Mg(2+)</name>
        <dbReference type="ChEBI" id="CHEBI:18420"/>
    </ligand>
</feature>
<feature type="binding site" description="in other chain" evidence="1">
    <location>
        <begin position="39"/>
        <end position="42"/>
    </location>
    <ligand>
        <name>IMP</name>
        <dbReference type="ChEBI" id="CHEBI:58053"/>
        <note>ligand shared between dimeric partners</note>
    </ligand>
</feature>
<feature type="binding site" evidence="1">
    <location>
        <begin position="41"/>
        <end position="43"/>
    </location>
    <ligand>
        <name>GTP</name>
        <dbReference type="ChEBI" id="CHEBI:37565"/>
    </ligand>
</feature>
<feature type="binding site" evidence="1">
    <location>
        <position position="41"/>
    </location>
    <ligand>
        <name>Mg(2+)</name>
        <dbReference type="ChEBI" id="CHEBI:18420"/>
    </ligand>
</feature>
<feature type="binding site" description="in other chain" evidence="1">
    <location>
        <position position="130"/>
    </location>
    <ligand>
        <name>IMP</name>
        <dbReference type="ChEBI" id="CHEBI:58053"/>
        <note>ligand shared between dimeric partners</note>
    </ligand>
</feature>
<feature type="binding site" evidence="1">
    <location>
        <position position="144"/>
    </location>
    <ligand>
        <name>IMP</name>
        <dbReference type="ChEBI" id="CHEBI:58053"/>
        <note>ligand shared between dimeric partners</note>
    </ligand>
</feature>
<feature type="binding site" description="in other chain" evidence="1">
    <location>
        <position position="225"/>
    </location>
    <ligand>
        <name>IMP</name>
        <dbReference type="ChEBI" id="CHEBI:58053"/>
        <note>ligand shared between dimeric partners</note>
    </ligand>
</feature>
<feature type="binding site" description="in other chain" evidence="1">
    <location>
        <position position="240"/>
    </location>
    <ligand>
        <name>IMP</name>
        <dbReference type="ChEBI" id="CHEBI:58053"/>
        <note>ligand shared between dimeric partners</note>
    </ligand>
</feature>
<feature type="binding site" evidence="1">
    <location>
        <begin position="300"/>
        <end position="306"/>
    </location>
    <ligand>
        <name>substrate</name>
    </ligand>
</feature>
<feature type="binding site" description="in other chain" evidence="1">
    <location>
        <position position="304"/>
    </location>
    <ligand>
        <name>IMP</name>
        <dbReference type="ChEBI" id="CHEBI:58053"/>
        <note>ligand shared between dimeric partners</note>
    </ligand>
</feature>
<feature type="binding site" evidence="1">
    <location>
        <position position="306"/>
    </location>
    <ligand>
        <name>GTP</name>
        <dbReference type="ChEBI" id="CHEBI:37565"/>
    </ligand>
</feature>
<feature type="binding site" evidence="1">
    <location>
        <begin position="332"/>
        <end position="334"/>
    </location>
    <ligand>
        <name>GTP</name>
        <dbReference type="ChEBI" id="CHEBI:37565"/>
    </ligand>
</feature>
<feature type="binding site" evidence="1">
    <location>
        <begin position="414"/>
        <end position="416"/>
    </location>
    <ligand>
        <name>GTP</name>
        <dbReference type="ChEBI" id="CHEBI:37565"/>
    </ligand>
</feature>
<protein>
    <recommendedName>
        <fullName evidence="1">Adenylosuccinate synthetase</fullName>
        <shortName evidence="1">AMPSase</shortName>
        <shortName evidence="1">AdSS</shortName>
        <ecNumber evidence="1">6.3.4.4</ecNumber>
    </recommendedName>
    <alternativeName>
        <fullName evidence="1">IMP--aspartate ligase</fullName>
    </alternativeName>
</protein>
<evidence type="ECO:0000255" key="1">
    <source>
        <dbReference type="HAMAP-Rule" id="MF_00011"/>
    </source>
</evidence>
<organism>
    <name type="scientific">Thioalkalivibrio sulfidiphilus (strain HL-EbGR7)</name>
    <dbReference type="NCBI Taxonomy" id="396588"/>
    <lineage>
        <taxon>Bacteria</taxon>
        <taxon>Pseudomonadati</taxon>
        <taxon>Pseudomonadota</taxon>
        <taxon>Gammaproteobacteria</taxon>
        <taxon>Chromatiales</taxon>
        <taxon>Ectothiorhodospiraceae</taxon>
        <taxon>Thioalkalivibrio</taxon>
    </lineage>
</organism>
<name>PURA_THISH</name>
<gene>
    <name evidence="1" type="primary">purA</name>
    <name type="ordered locus">Tgr7_0903</name>
</gene>
<keyword id="KW-0963">Cytoplasm</keyword>
<keyword id="KW-0342">GTP-binding</keyword>
<keyword id="KW-0436">Ligase</keyword>
<keyword id="KW-0460">Magnesium</keyword>
<keyword id="KW-0479">Metal-binding</keyword>
<keyword id="KW-0547">Nucleotide-binding</keyword>
<keyword id="KW-0658">Purine biosynthesis</keyword>
<keyword id="KW-1185">Reference proteome</keyword>
<proteinExistence type="inferred from homology"/>